<protein>
    <recommendedName>
        <fullName evidence="1">Arginine--tRNA ligase</fullName>
        <ecNumber evidence="1">6.1.1.19</ecNumber>
    </recommendedName>
    <alternativeName>
        <fullName evidence="1">Arginyl-tRNA synthetase</fullName>
        <shortName evidence="1">ArgRS</shortName>
    </alternativeName>
</protein>
<feature type="chain" id="PRO_1000018050" description="Arginine--tRNA ligase">
    <location>
        <begin position="1"/>
        <end position="564"/>
    </location>
</feature>
<feature type="short sequence motif" description="'HIGH' region">
    <location>
        <begin position="122"/>
        <end position="132"/>
    </location>
</feature>
<name>SYR_LACLM</name>
<reference key="1">
    <citation type="journal article" date="2007" name="J. Bacteriol.">
        <title>The complete genome sequence of the lactic acid bacterial paradigm Lactococcus lactis subsp. cremoris MG1363.</title>
        <authorList>
            <person name="Wegmann U."/>
            <person name="O'Connell-Motherway M."/>
            <person name="Zomer A."/>
            <person name="Buist G."/>
            <person name="Shearman C."/>
            <person name="Canchaya C."/>
            <person name="Ventura M."/>
            <person name="Goesmann A."/>
            <person name="Gasson M.J."/>
            <person name="Kuipers O.P."/>
            <person name="van Sinderen D."/>
            <person name="Kok J."/>
        </authorList>
    </citation>
    <scope>NUCLEOTIDE SEQUENCE [LARGE SCALE GENOMIC DNA]</scope>
    <source>
        <strain>MG1363</strain>
    </source>
</reference>
<sequence length="564" mass="62877">MDEKQLVSQALSAAIDGVLGVEQIAAIIEKPKSSDLGDLAFPAFQLAKTLRKSPQIIAGEIAEKIDTKGFEKVIAVGPYVNFFLDKNATASEVIREVLAEGEHYGDANIGEGGNVPIDMSAPNIAKPFSIGHLRSTVIGDSIAKIYEKLGYQPIKINHLGDWGKQFGLLITAYKKYGDEATITANPIDELLKLYVKINAEAKEDSEVDEEGRQWFLKMEQGDEEALRIWKWFSDVSLIEFNRIYGKLGVTFDHFMGESFYSDKMDAIVEDLENKNLLHESKGALIVDLEKYNLNPALIKKTDGATLYITRDLATAAYRKKTFNFVKSLYVVGGEQTNHFKQLKAVLKEAGYDWSDDMVHVPFGMVTQGGKKFSTRKGHVVKLEMALDEAVDRAEKQIEAKNPNLENKEEVAKQVGVGAVKFYDLKTDRNNGYDFDLDEMVSFEGETGPYVQYAHARIQSILRKANRKVNIDNISLVVSDAEAWEIVKALKEFPNIVKRAADNYEPSIIAKYAISLAQAFNKYYAHVRILEDDAQLDGRLALISATSIVLKEALRLLGVAAPENM</sequence>
<accession>A2RNI8</accession>
<comment type="catalytic activity">
    <reaction evidence="1">
        <text>tRNA(Arg) + L-arginine + ATP = L-arginyl-tRNA(Arg) + AMP + diphosphate</text>
        <dbReference type="Rhea" id="RHEA:20301"/>
        <dbReference type="Rhea" id="RHEA-COMP:9658"/>
        <dbReference type="Rhea" id="RHEA-COMP:9673"/>
        <dbReference type="ChEBI" id="CHEBI:30616"/>
        <dbReference type="ChEBI" id="CHEBI:32682"/>
        <dbReference type="ChEBI" id="CHEBI:33019"/>
        <dbReference type="ChEBI" id="CHEBI:78442"/>
        <dbReference type="ChEBI" id="CHEBI:78513"/>
        <dbReference type="ChEBI" id="CHEBI:456215"/>
        <dbReference type="EC" id="6.1.1.19"/>
    </reaction>
</comment>
<comment type="subunit">
    <text evidence="1">Monomer.</text>
</comment>
<comment type="subcellular location">
    <subcellularLocation>
        <location evidence="1">Cytoplasm</location>
    </subcellularLocation>
</comment>
<comment type="similarity">
    <text evidence="1">Belongs to the class-I aminoacyl-tRNA synthetase family.</text>
</comment>
<gene>
    <name evidence="1" type="primary">argS</name>
    <name type="ordered locus">llmg_2314</name>
</gene>
<evidence type="ECO:0000255" key="1">
    <source>
        <dbReference type="HAMAP-Rule" id="MF_00123"/>
    </source>
</evidence>
<dbReference type="EC" id="6.1.1.19" evidence="1"/>
<dbReference type="EMBL" id="AM406671">
    <property type="protein sequence ID" value="CAL98878.1"/>
    <property type="molecule type" value="Genomic_DNA"/>
</dbReference>
<dbReference type="RefSeq" id="WP_011835986.1">
    <property type="nucleotide sequence ID" value="NC_009004.1"/>
</dbReference>
<dbReference type="SMR" id="A2RNI8"/>
<dbReference type="STRING" id="416870.llmg_2314"/>
<dbReference type="KEGG" id="llm:llmg_2314"/>
<dbReference type="eggNOG" id="COG0018">
    <property type="taxonomic scope" value="Bacteria"/>
</dbReference>
<dbReference type="HOGENOM" id="CLU_006406_6_1_9"/>
<dbReference type="OrthoDB" id="9805987at2"/>
<dbReference type="PhylomeDB" id="A2RNI8"/>
<dbReference type="Proteomes" id="UP000000364">
    <property type="component" value="Chromosome"/>
</dbReference>
<dbReference type="GO" id="GO:0005737">
    <property type="term" value="C:cytoplasm"/>
    <property type="evidence" value="ECO:0007669"/>
    <property type="project" value="UniProtKB-SubCell"/>
</dbReference>
<dbReference type="GO" id="GO:0004814">
    <property type="term" value="F:arginine-tRNA ligase activity"/>
    <property type="evidence" value="ECO:0007669"/>
    <property type="project" value="UniProtKB-UniRule"/>
</dbReference>
<dbReference type="GO" id="GO:0005524">
    <property type="term" value="F:ATP binding"/>
    <property type="evidence" value="ECO:0007669"/>
    <property type="project" value="UniProtKB-UniRule"/>
</dbReference>
<dbReference type="GO" id="GO:0006420">
    <property type="term" value="P:arginyl-tRNA aminoacylation"/>
    <property type="evidence" value="ECO:0007669"/>
    <property type="project" value="UniProtKB-UniRule"/>
</dbReference>
<dbReference type="CDD" id="cd07956">
    <property type="entry name" value="Anticodon_Ia_Arg"/>
    <property type="match status" value="1"/>
</dbReference>
<dbReference type="CDD" id="cd00671">
    <property type="entry name" value="ArgRS_core"/>
    <property type="match status" value="1"/>
</dbReference>
<dbReference type="FunFam" id="3.40.50.620:FF:000116">
    <property type="entry name" value="Arginine--tRNA ligase"/>
    <property type="match status" value="1"/>
</dbReference>
<dbReference type="FunFam" id="1.10.730.10:FF:000006">
    <property type="entry name" value="Arginyl-tRNA synthetase 2, mitochondrial"/>
    <property type="match status" value="1"/>
</dbReference>
<dbReference type="Gene3D" id="3.30.1360.70">
    <property type="entry name" value="Arginyl tRNA synthetase N-terminal domain"/>
    <property type="match status" value="1"/>
</dbReference>
<dbReference type="Gene3D" id="3.40.50.620">
    <property type="entry name" value="HUPs"/>
    <property type="match status" value="1"/>
</dbReference>
<dbReference type="Gene3D" id="1.10.730.10">
    <property type="entry name" value="Isoleucyl-tRNA Synthetase, Domain 1"/>
    <property type="match status" value="1"/>
</dbReference>
<dbReference type="HAMAP" id="MF_00123">
    <property type="entry name" value="Arg_tRNA_synth"/>
    <property type="match status" value="1"/>
</dbReference>
<dbReference type="InterPro" id="IPR001278">
    <property type="entry name" value="Arg-tRNA-ligase"/>
</dbReference>
<dbReference type="InterPro" id="IPR005148">
    <property type="entry name" value="Arg-tRNA-synth_N"/>
</dbReference>
<dbReference type="InterPro" id="IPR036695">
    <property type="entry name" value="Arg-tRNA-synth_N_sf"/>
</dbReference>
<dbReference type="InterPro" id="IPR035684">
    <property type="entry name" value="ArgRS_core"/>
</dbReference>
<dbReference type="InterPro" id="IPR008909">
    <property type="entry name" value="DALR_anticod-bd"/>
</dbReference>
<dbReference type="InterPro" id="IPR014729">
    <property type="entry name" value="Rossmann-like_a/b/a_fold"/>
</dbReference>
<dbReference type="InterPro" id="IPR009080">
    <property type="entry name" value="tRNAsynth_Ia_anticodon-bd"/>
</dbReference>
<dbReference type="NCBIfam" id="TIGR00456">
    <property type="entry name" value="argS"/>
    <property type="match status" value="1"/>
</dbReference>
<dbReference type="PANTHER" id="PTHR11956:SF5">
    <property type="entry name" value="ARGININE--TRNA LIGASE, CYTOPLASMIC"/>
    <property type="match status" value="1"/>
</dbReference>
<dbReference type="PANTHER" id="PTHR11956">
    <property type="entry name" value="ARGINYL-TRNA SYNTHETASE"/>
    <property type="match status" value="1"/>
</dbReference>
<dbReference type="Pfam" id="PF03485">
    <property type="entry name" value="Arg_tRNA_synt_N"/>
    <property type="match status" value="1"/>
</dbReference>
<dbReference type="Pfam" id="PF05746">
    <property type="entry name" value="DALR_1"/>
    <property type="match status" value="1"/>
</dbReference>
<dbReference type="Pfam" id="PF00750">
    <property type="entry name" value="tRNA-synt_1d"/>
    <property type="match status" value="1"/>
</dbReference>
<dbReference type="PRINTS" id="PR01038">
    <property type="entry name" value="TRNASYNTHARG"/>
</dbReference>
<dbReference type="SMART" id="SM01016">
    <property type="entry name" value="Arg_tRNA_synt_N"/>
    <property type="match status" value="1"/>
</dbReference>
<dbReference type="SMART" id="SM00836">
    <property type="entry name" value="DALR_1"/>
    <property type="match status" value="1"/>
</dbReference>
<dbReference type="SUPFAM" id="SSF47323">
    <property type="entry name" value="Anticodon-binding domain of a subclass of class I aminoacyl-tRNA synthetases"/>
    <property type="match status" value="1"/>
</dbReference>
<dbReference type="SUPFAM" id="SSF55190">
    <property type="entry name" value="Arginyl-tRNA synthetase (ArgRS), N-terminal 'additional' domain"/>
    <property type="match status" value="1"/>
</dbReference>
<dbReference type="SUPFAM" id="SSF52374">
    <property type="entry name" value="Nucleotidylyl transferase"/>
    <property type="match status" value="1"/>
</dbReference>
<keyword id="KW-0030">Aminoacyl-tRNA synthetase</keyword>
<keyword id="KW-0067">ATP-binding</keyword>
<keyword id="KW-0963">Cytoplasm</keyword>
<keyword id="KW-0436">Ligase</keyword>
<keyword id="KW-0547">Nucleotide-binding</keyword>
<keyword id="KW-0648">Protein biosynthesis</keyword>
<proteinExistence type="inferred from homology"/>
<organism>
    <name type="scientific">Lactococcus lactis subsp. cremoris (strain MG1363)</name>
    <dbReference type="NCBI Taxonomy" id="416870"/>
    <lineage>
        <taxon>Bacteria</taxon>
        <taxon>Bacillati</taxon>
        <taxon>Bacillota</taxon>
        <taxon>Bacilli</taxon>
        <taxon>Lactobacillales</taxon>
        <taxon>Streptococcaceae</taxon>
        <taxon>Lactococcus</taxon>
        <taxon>Lactococcus cremoris subsp. cremoris</taxon>
    </lineage>
</organism>